<sequence length="309" mass="34920">MTAAHVAAPEPGQYELSHLRLLEAEAIHIIREVAAEFERPVLLFSGGKDSIVMLHLAIKAFAPARLPFPVMHVDTGHNFDEVIATRDRLVAENGVRLVVASVQEDIDAGRVVDNGPSRNPLQTVTLLRAIRENRFDAAFGGARRDEEKARAKERVFSFRDEFGQWDPKAQRPELWNIYNGRHRKGEHIRVFPLSNWTEYDIWAYIGAEGITLPGIYYAHTRPVFQRDGMLLAVHPYMQPRDDEEVFETSVRFRTVGDVTCTGCVESTASTVEDIIAETAVSRLTERGATRADDRISEAGMEDRKREGYF</sequence>
<protein>
    <recommendedName>
        <fullName evidence="1">Sulfate adenylyltransferase subunit 2</fullName>
        <ecNumber evidence="1">2.7.7.4</ecNumber>
    </recommendedName>
    <alternativeName>
        <fullName evidence="1">ATP-sulfurylase small subunit</fullName>
    </alternativeName>
    <alternativeName>
        <fullName evidence="1">Sulfate adenylate transferase</fullName>
        <shortName evidence="1">SAT</shortName>
    </alternativeName>
</protein>
<dbReference type="EC" id="2.7.7.4" evidence="1"/>
<dbReference type="EMBL" id="CP000580">
    <property type="protein sequence ID" value="ABN99709.1"/>
    <property type="molecule type" value="Genomic_DNA"/>
</dbReference>
<dbReference type="SMR" id="A3Q3I2"/>
<dbReference type="KEGG" id="mjl:Mjls_3934"/>
<dbReference type="HOGENOM" id="CLU_043026_0_0_11"/>
<dbReference type="BioCyc" id="MSP164757:G1G8C-3975-MONOMER"/>
<dbReference type="UniPathway" id="UPA00140">
    <property type="reaction ID" value="UER00204"/>
</dbReference>
<dbReference type="GO" id="GO:0005524">
    <property type="term" value="F:ATP binding"/>
    <property type="evidence" value="ECO:0007669"/>
    <property type="project" value="UniProtKB-KW"/>
</dbReference>
<dbReference type="GO" id="GO:0004781">
    <property type="term" value="F:sulfate adenylyltransferase (ATP) activity"/>
    <property type="evidence" value="ECO:0007669"/>
    <property type="project" value="UniProtKB-UniRule"/>
</dbReference>
<dbReference type="GO" id="GO:0070814">
    <property type="term" value="P:hydrogen sulfide biosynthetic process"/>
    <property type="evidence" value="ECO:0007669"/>
    <property type="project" value="UniProtKB-UniRule"/>
</dbReference>
<dbReference type="GO" id="GO:0000103">
    <property type="term" value="P:sulfate assimilation"/>
    <property type="evidence" value="ECO:0007669"/>
    <property type="project" value="UniProtKB-UniRule"/>
</dbReference>
<dbReference type="FunFam" id="3.40.50.620:FF:000002">
    <property type="entry name" value="Sulfate adenylyltransferase subunit 2"/>
    <property type="match status" value="1"/>
</dbReference>
<dbReference type="Gene3D" id="3.40.50.620">
    <property type="entry name" value="HUPs"/>
    <property type="match status" value="1"/>
</dbReference>
<dbReference type="HAMAP" id="MF_00064">
    <property type="entry name" value="Sulf_adenylyltr_sub2"/>
    <property type="match status" value="1"/>
</dbReference>
<dbReference type="InterPro" id="IPR002500">
    <property type="entry name" value="PAPS_reduct_dom"/>
</dbReference>
<dbReference type="InterPro" id="IPR014729">
    <property type="entry name" value="Rossmann-like_a/b/a_fold"/>
</dbReference>
<dbReference type="InterPro" id="IPR011784">
    <property type="entry name" value="SO4_adenylTrfase_ssu"/>
</dbReference>
<dbReference type="InterPro" id="IPR050128">
    <property type="entry name" value="Sulfate_adenylyltrnsfr_sub2"/>
</dbReference>
<dbReference type="NCBIfam" id="TIGR02039">
    <property type="entry name" value="CysD"/>
    <property type="match status" value="1"/>
</dbReference>
<dbReference type="NCBIfam" id="NF003587">
    <property type="entry name" value="PRK05253.1"/>
    <property type="match status" value="1"/>
</dbReference>
<dbReference type="NCBIfam" id="NF009214">
    <property type="entry name" value="PRK12563.1"/>
    <property type="match status" value="1"/>
</dbReference>
<dbReference type="PANTHER" id="PTHR43196">
    <property type="entry name" value="SULFATE ADENYLYLTRANSFERASE SUBUNIT 2"/>
    <property type="match status" value="1"/>
</dbReference>
<dbReference type="PANTHER" id="PTHR43196:SF1">
    <property type="entry name" value="SULFATE ADENYLYLTRANSFERASE SUBUNIT 2"/>
    <property type="match status" value="1"/>
</dbReference>
<dbReference type="Pfam" id="PF01507">
    <property type="entry name" value="PAPS_reduct"/>
    <property type="match status" value="1"/>
</dbReference>
<dbReference type="PIRSF" id="PIRSF002936">
    <property type="entry name" value="CysDAde_trans"/>
    <property type="match status" value="1"/>
</dbReference>
<dbReference type="SUPFAM" id="SSF52402">
    <property type="entry name" value="Adenine nucleotide alpha hydrolases-like"/>
    <property type="match status" value="1"/>
</dbReference>
<feature type="chain" id="PRO_1000092209" description="Sulfate adenylyltransferase subunit 2">
    <location>
        <begin position="1"/>
        <end position="309"/>
    </location>
</feature>
<evidence type="ECO:0000255" key="1">
    <source>
        <dbReference type="HAMAP-Rule" id="MF_00064"/>
    </source>
</evidence>
<proteinExistence type="inferred from homology"/>
<organism>
    <name type="scientific">Mycobacterium sp. (strain JLS)</name>
    <dbReference type="NCBI Taxonomy" id="164757"/>
    <lineage>
        <taxon>Bacteria</taxon>
        <taxon>Bacillati</taxon>
        <taxon>Actinomycetota</taxon>
        <taxon>Actinomycetes</taxon>
        <taxon>Mycobacteriales</taxon>
        <taxon>Mycobacteriaceae</taxon>
        <taxon>Mycobacterium</taxon>
    </lineage>
</organism>
<reference key="1">
    <citation type="submission" date="2007-02" db="EMBL/GenBank/DDBJ databases">
        <title>Complete sequence of Mycobacterium sp. JLS.</title>
        <authorList>
            <consortium name="US DOE Joint Genome Institute"/>
            <person name="Copeland A."/>
            <person name="Lucas S."/>
            <person name="Lapidus A."/>
            <person name="Barry K."/>
            <person name="Detter J.C."/>
            <person name="Glavina del Rio T."/>
            <person name="Hammon N."/>
            <person name="Israni S."/>
            <person name="Dalin E."/>
            <person name="Tice H."/>
            <person name="Pitluck S."/>
            <person name="Chain P."/>
            <person name="Malfatti S."/>
            <person name="Shin M."/>
            <person name="Vergez L."/>
            <person name="Schmutz J."/>
            <person name="Larimer F."/>
            <person name="Land M."/>
            <person name="Hauser L."/>
            <person name="Kyrpides N."/>
            <person name="Mikhailova N."/>
            <person name="Miller C.D."/>
            <person name="Anderson A.J."/>
            <person name="Sims R.C."/>
            <person name="Richardson P."/>
        </authorList>
    </citation>
    <scope>NUCLEOTIDE SEQUENCE [LARGE SCALE GENOMIC DNA]</scope>
    <source>
        <strain>JLS</strain>
    </source>
</reference>
<comment type="function">
    <text evidence="1">With CysN forms the ATP sulfurylase (ATPS) that catalyzes the adenylation of sulfate producing adenosine 5'-phosphosulfate (APS) and diphosphate, the first enzymatic step in sulfur assimilation pathway. APS synthesis involves the formation of a high-energy phosphoric-sulfuric acid anhydride bond driven by GTP hydrolysis by CysN coupled to ATP hydrolysis by CysD.</text>
</comment>
<comment type="catalytic activity">
    <reaction evidence="1">
        <text>sulfate + ATP + H(+) = adenosine 5'-phosphosulfate + diphosphate</text>
        <dbReference type="Rhea" id="RHEA:18133"/>
        <dbReference type="ChEBI" id="CHEBI:15378"/>
        <dbReference type="ChEBI" id="CHEBI:16189"/>
        <dbReference type="ChEBI" id="CHEBI:30616"/>
        <dbReference type="ChEBI" id="CHEBI:33019"/>
        <dbReference type="ChEBI" id="CHEBI:58243"/>
        <dbReference type="EC" id="2.7.7.4"/>
    </reaction>
</comment>
<comment type="pathway">
    <text evidence="1">Sulfur metabolism; hydrogen sulfide biosynthesis; sulfite from sulfate: step 1/3.</text>
</comment>
<comment type="subunit">
    <text evidence="1">Heterodimer composed of CysD, the smaller subunit, and CysN.</text>
</comment>
<comment type="similarity">
    <text evidence="1">Belongs to the PAPS reductase family. CysD subfamily.</text>
</comment>
<name>CYSD_MYCSJ</name>
<accession>A3Q3I2</accession>
<keyword id="KW-0067">ATP-binding</keyword>
<keyword id="KW-0547">Nucleotide-binding</keyword>
<keyword id="KW-0548">Nucleotidyltransferase</keyword>
<keyword id="KW-0808">Transferase</keyword>
<gene>
    <name evidence="1" type="primary">cysD</name>
    <name type="ordered locus">Mjls_3934</name>
</gene>